<accession>Q8G654</accession>
<keyword id="KW-0067">ATP-binding</keyword>
<keyword id="KW-0460">Magnesium</keyword>
<keyword id="KW-0511">Multifunctional enzyme</keyword>
<keyword id="KW-0547">Nucleotide-binding</keyword>
<keyword id="KW-0548">Nucleotidyltransferase</keyword>
<keyword id="KW-1185">Reference proteome</keyword>
<keyword id="KW-0808">Transferase</keyword>
<name>GLNE_BIFLO</name>
<organism>
    <name type="scientific">Bifidobacterium longum (strain NCC 2705)</name>
    <dbReference type="NCBI Taxonomy" id="206672"/>
    <lineage>
        <taxon>Bacteria</taxon>
        <taxon>Bacillati</taxon>
        <taxon>Actinomycetota</taxon>
        <taxon>Actinomycetes</taxon>
        <taxon>Bifidobacteriales</taxon>
        <taxon>Bifidobacteriaceae</taxon>
        <taxon>Bifidobacterium</taxon>
    </lineage>
</organism>
<sequence length="1076" mass="120297">MESSIFKPSSMDLIRAGLQDLDKARALFDQLKADDIPDERCAELLSALAHACDPDMALSNFVDIVNAMQSSQRDLEHVIPDNDALKRLVTVLGVSDAMGKFMRFKPQLVEAAAVDNCNSHLFNHAQRRARLLKAVGADPDEPAMPVASKDLAEAATALRSSYRNQLAAIIAQDAVADDPASIQPTISRELSDLADAALEGALAIARHETEGSEHVRFTIIGMGKLGAQELNYVSDVDLIYVVEPADKDVDHQTLIRVGTKMGTMLQRVCQSAIMGVAEQPLWQIDGGLRPEGKDGALVRVLSSHKNYYEQWAENWEFQALLKARPVAGDPDLGRAYMDMTRPFVWSASKRKNFVYDCQKMRKRVEDLIPAPLKDREIKLGRGGLRDVEFTVQMLQLVHGRTDESLRTSNTLDSLQRLSEGGYVSRKQAVRMSQDYRFERVMEHRQQIWSLKRTHLFPDLGRASVGGLEKKRDIDVDELNQNQELRRLARAFGLHPEELVDKYDDTRREVRHLHLDIYYRPMLPVNAQMENDQIVLSVEAAQERFESIGFGDPDAAIRHVQALTAGVGRAAKINRIILPAVLQWLGEGQNPDMGLLNWRKLEENFGTESGYLGFLRDSTSAAQRLCHILSNSRFLGDALNKSVESISWLGDDDNLQARTREALDVQTGSALERFGSNINEFATSMRAMRRHEIERIGLSWMSGVISDSDSLKAMTDVYDAIIDASLTWAVRHQIAEFGVETAPAGITVIAMGRYGGREVNFSSDADAILIYRPADDADDGQANAFAKKVVEDLRNILQGPTTLEPKIELDLDLRPEGKNGPLVRSYASCEEYYESWASTWERQALLRARYAAGDAELARDFLINIADPLRYPTTELTEAELQNIRKLKARMEAERLPRGVRRERHLKLGKGGLSDVEWTVQLMQLQHAGDIKDLRVNGTLEALDVLEAKKLISAIDAIQLRKAWTLCTAARNGSYLWSGRANQADILPDDIYSLGGIAVYLGYGAHRGQHFENDLLAVMRKCRDVCQRLFYGKTEGEAAAATTATASAATQQPQTAPRPRMHVIAPRLERNRRRAQR</sequence>
<reference key="1">
    <citation type="journal article" date="2002" name="Proc. Natl. Acad. Sci. U.S.A.">
        <title>The genome sequence of Bifidobacterium longum reflects its adaptation to the human gastrointestinal tract.</title>
        <authorList>
            <person name="Schell M.A."/>
            <person name="Karmirantzou M."/>
            <person name="Snel B."/>
            <person name="Vilanova D."/>
            <person name="Berger B."/>
            <person name="Pessi G."/>
            <person name="Zwahlen M.-C."/>
            <person name="Desiere F."/>
            <person name="Bork P."/>
            <person name="Delley M."/>
            <person name="Pridmore R.D."/>
            <person name="Arigoni F."/>
        </authorList>
    </citation>
    <scope>NUCLEOTIDE SEQUENCE [LARGE SCALE GENOMIC DNA]</scope>
    <source>
        <strain>NCC 2705</strain>
    </source>
</reference>
<proteinExistence type="inferred from homology"/>
<protein>
    <recommendedName>
        <fullName evidence="1">Bifunctional glutamine synthetase adenylyltransferase/adenylyl-removing enzyme</fullName>
    </recommendedName>
    <alternativeName>
        <fullName evidence="1">ATP:glutamine synthetase adenylyltransferase</fullName>
    </alternativeName>
    <alternativeName>
        <fullName evidence="1">ATase</fullName>
    </alternativeName>
    <domain>
        <recommendedName>
            <fullName evidence="1">Glutamine synthetase adenylyl-L-tyrosine phosphorylase</fullName>
            <ecNumber evidence="1">2.7.7.89</ecNumber>
        </recommendedName>
        <alternativeName>
            <fullName evidence="1">Adenylyl removase</fullName>
            <shortName evidence="1">AR</shortName>
            <shortName evidence="1">AT-N</shortName>
        </alternativeName>
    </domain>
    <domain>
        <recommendedName>
            <fullName evidence="1">Glutamine synthetase adenylyl transferase</fullName>
            <ecNumber evidence="1">2.7.7.42</ecNumber>
        </recommendedName>
        <alternativeName>
            <fullName evidence="1">Adenylyl transferase</fullName>
            <shortName evidence="1">AT</shortName>
            <shortName evidence="1">AT-C</shortName>
        </alternativeName>
    </domain>
</protein>
<feature type="chain" id="PRO_0000209230" description="Bifunctional glutamine synthetase adenylyltransferase/adenylyl-removing enzyme">
    <location>
        <begin position="1"/>
        <end position="1076"/>
    </location>
</feature>
<feature type="region of interest" description="Adenylyl removase" evidence="1">
    <location>
        <begin position="1"/>
        <end position="521"/>
    </location>
</feature>
<feature type="region of interest" description="Adenylyl transferase" evidence="1">
    <location>
        <begin position="524"/>
        <end position="1076"/>
    </location>
</feature>
<feature type="region of interest" description="Disordered" evidence="2">
    <location>
        <begin position="1042"/>
        <end position="1076"/>
    </location>
</feature>
<feature type="compositionally biased region" description="Low complexity" evidence="2">
    <location>
        <begin position="1042"/>
        <end position="1056"/>
    </location>
</feature>
<evidence type="ECO:0000255" key="1">
    <source>
        <dbReference type="HAMAP-Rule" id="MF_00802"/>
    </source>
</evidence>
<evidence type="ECO:0000256" key="2">
    <source>
        <dbReference type="SAM" id="MobiDB-lite"/>
    </source>
</evidence>
<comment type="function">
    <text evidence="1">Involved in the regulation of glutamine synthetase GlnA, a key enzyme in the process to assimilate ammonia. When cellular nitrogen levels are high, the C-terminal adenylyl transferase (AT) inactivates GlnA by covalent transfer of an adenylyl group from ATP to specific tyrosine residue of GlnA, thus reducing its activity. Conversely, when nitrogen levels are low, the N-terminal adenylyl removase (AR) activates GlnA by removing the adenylyl group by phosphorolysis, increasing its activity. The regulatory region of GlnE binds the signal transduction protein PII (GlnB) which indicates the nitrogen status of the cell.</text>
</comment>
<comment type="catalytic activity">
    <reaction evidence="1">
        <text>[glutamine synthetase]-O(4)-(5'-adenylyl)-L-tyrosine + phosphate = [glutamine synthetase]-L-tyrosine + ADP</text>
        <dbReference type="Rhea" id="RHEA:43716"/>
        <dbReference type="Rhea" id="RHEA-COMP:10660"/>
        <dbReference type="Rhea" id="RHEA-COMP:10661"/>
        <dbReference type="ChEBI" id="CHEBI:43474"/>
        <dbReference type="ChEBI" id="CHEBI:46858"/>
        <dbReference type="ChEBI" id="CHEBI:83624"/>
        <dbReference type="ChEBI" id="CHEBI:456216"/>
        <dbReference type="EC" id="2.7.7.89"/>
    </reaction>
</comment>
<comment type="catalytic activity">
    <reaction evidence="1">
        <text>[glutamine synthetase]-L-tyrosine + ATP = [glutamine synthetase]-O(4)-(5'-adenylyl)-L-tyrosine + diphosphate</text>
        <dbReference type="Rhea" id="RHEA:18589"/>
        <dbReference type="Rhea" id="RHEA-COMP:10660"/>
        <dbReference type="Rhea" id="RHEA-COMP:10661"/>
        <dbReference type="ChEBI" id="CHEBI:30616"/>
        <dbReference type="ChEBI" id="CHEBI:33019"/>
        <dbReference type="ChEBI" id="CHEBI:46858"/>
        <dbReference type="ChEBI" id="CHEBI:83624"/>
        <dbReference type="EC" id="2.7.7.42"/>
    </reaction>
</comment>
<comment type="cofactor">
    <cofactor evidence="1">
        <name>Mg(2+)</name>
        <dbReference type="ChEBI" id="CHEBI:18420"/>
    </cofactor>
</comment>
<comment type="similarity">
    <text evidence="1">Belongs to the GlnE family.</text>
</comment>
<dbReference type="EC" id="2.7.7.89" evidence="1"/>
<dbReference type="EC" id="2.7.7.42" evidence="1"/>
<dbReference type="EMBL" id="AE014295">
    <property type="protein sequence ID" value="AAN24610.1"/>
    <property type="molecule type" value="Genomic_DNA"/>
</dbReference>
<dbReference type="RefSeq" id="NP_695974.1">
    <property type="nucleotide sequence ID" value="NC_004307.2"/>
</dbReference>
<dbReference type="RefSeq" id="WP_011068132.1">
    <property type="nucleotide sequence ID" value="NC_004307.2"/>
</dbReference>
<dbReference type="SMR" id="Q8G654"/>
<dbReference type="STRING" id="206672.BL0795"/>
<dbReference type="EnsemblBacteria" id="AAN24610">
    <property type="protein sequence ID" value="AAN24610"/>
    <property type="gene ID" value="BL0795"/>
</dbReference>
<dbReference type="KEGG" id="blo:BL0795"/>
<dbReference type="PATRIC" id="fig|206672.9.peg.496"/>
<dbReference type="HOGENOM" id="CLU_006233_1_0_11"/>
<dbReference type="OrthoDB" id="9759366at2"/>
<dbReference type="PhylomeDB" id="Q8G654"/>
<dbReference type="Proteomes" id="UP000000439">
    <property type="component" value="Chromosome"/>
</dbReference>
<dbReference type="GO" id="GO:0005829">
    <property type="term" value="C:cytosol"/>
    <property type="evidence" value="ECO:0007669"/>
    <property type="project" value="TreeGrafter"/>
</dbReference>
<dbReference type="GO" id="GO:0008882">
    <property type="term" value="F:[glutamate-ammonia-ligase] adenylyltransferase activity"/>
    <property type="evidence" value="ECO:0007669"/>
    <property type="project" value="UniProtKB-UniRule"/>
</dbReference>
<dbReference type="GO" id="GO:0047388">
    <property type="term" value="F:[glutamine synthetase]-adenylyl-L-tyrosine phosphorylase activity"/>
    <property type="evidence" value="ECO:0007669"/>
    <property type="project" value="UniProtKB-EC"/>
</dbReference>
<dbReference type="GO" id="GO:0005524">
    <property type="term" value="F:ATP binding"/>
    <property type="evidence" value="ECO:0007669"/>
    <property type="project" value="UniProtKB-UniRule"/>
</dbReference>
<dbReference type="GO" id="GO:0000287">
    <property type="term" value="F:magnesium ion binding"/>
    <property type="evidence" value="ECO:0007669"/>
    <property type="project" value="UniProtKB-UniRule"/>
</dbReference>
<dbReference type="GO" id="GO:0000820">
    <property type="term" value="P:regulation of glutamine family amino acid metabolic process"/>
    <property type="evidence" value="ECO:0007669"/>
    <property type="project" value="UniProtKB-UniRule"/>
</dbReference>
<dbReference type="CDD" id="cd05401">
    <property type="entry name" value="NT_GlnE_GlnD_like"/>
    <property type="match status" value="2"/>
</dbReference>
<dbReference type="Gene3D" id="3.30.460.10">
    <property type="entry name" value="Beta Polymerase, domain 2"/>
    <property type="match status" value="2"/>
</dbReference>
<dbReference type="Gene3D" id="1.20.120.330">
    <property type="entry name" value="Nucleotidyltransferases domain 2"/>
    <property type="match status" value="2"/>
</dbReference>
<dbReference type="HAMAP" id="MF_00802">
    <property type="entry name" value="GlnE"/>
    <property type="match status" value="1"/>
</dbReference>
<dbReference type="InterPro" id="IPR023057">
    <property type="entry name" value="GlnE"/>
</dbReference>
<dbReference type="InterPro" id="IPR005190">
    <property type="entry name" value="GlnE_rpt_dom"/>
</dbReference>
<dbReference type="InterPro" id="IPR043519">
    <property type="entry name" value="NT_sf"/>
</dbReference>
<dbReference type="InterPro" id="IPR013546">
    <property type="entry name" value="PII_UdlTrfase/GS_AdlTrfase"/>
</dbReference>
<dbReference type="NCBIfam" id="NF010707">
    <property type="entry name" value="PRK14109.1"/>
    <property type="match status" value="1"/>
</dbReference>
<dbReference type="PANTHER" id="PTHR30621:SF0">
    <property type="entry name" value="BIFUNCTIONAL GLUTAMINE SYNTHETASE ADENYLYLTRANSFERASE_ADENYLYL-REMOVING ENZYME"/>
    <property type="match status" value="1"/>
</dbReference>
<dbReference type="PANTHER" id="PTHR30621">
    <property type="entry name" value="GLUTAMINE SYNTHETASE ADENYLYLTRANSFERASE"/>
    <property type="match status" value="1"/>
</dbReference>
<dbReference type="Pfam" id="PF08335">
    <property type="entry name" value="GlnD_UR_UTase"/>
    <property type="match status" value="2"/>
</dbReference>
<dbReference type="Pfam" id="PF03710">
    <property type="entry name" value="GlnE"/>
    <property type="match status" value="2"/>
</dbReference>
<dbReference type="SUPFAM" id="SSF81301">
    <property type="entry name" value="Nucleotidyltransferase"/>
    <property type="match status" value="2"/>
</dbReference>
<dbReference type="SUPFAM" id="SSF81593">
    <property type="entry name" value="Nucleotidyltransferase substrate binding subunit/domain"/>
    <property type="match status" value="2"/>
</dbReference>
<gene>
    <name evidence="1" type="primary">glnE</name>
    <name type="ordered locus">BL0795</name>
</gene>